<reference key="1">
    <citation type="journal article" date="2002" name="Mol. Biol. Evol.">
        <title>The plastid chromosome of Atropa belladonna and its comparison with that of Nicotiana tabacum: the role of RNA editing in generating divergence in the process of plant speciation.</title>
        <authorList>
            <person name="Schmitz-Linneweber C."/>
            <person name="Regel R."/>
            <person name="Du T.G."/>
            <person name="Hupfer H."/>
            <person name="Herrmann R.G."/>
            <person name="Maier R.M."/>
        </authorList>
    </citation>
    <scope>NUCLEOTIDE SEQUENCE [LARGE SCALE GENOMIC DNA]</scope>
    <source>
        <strain>cv. Ab5p(kan)</strain>
    </source>
</reference>
<protein>
    <recommendedName>
        <fullName evidence="2">Photosystem II D2 protein</fullName>
        <shortName evidence="2">PSII D2 protein</shortName>
        <ecNumber evidence="2">1.10.3.9</ecNumber>
    </recommendedName>
    <alternativeName>
        <fullName evidence="2">Photosystem Q(A) protein</fullName>
    </alternativeName>
</protein>
<proteinExistence type="inferred from homology"/>
<keyword id="KW-0007">Acetylation</keyword>
<keyword id="KW-0148">Chlorophyll</keyword>
<keyword id="KW-0150">Chloroplast</keyword>
<keyword id="KW-0157">Chromophore</keyword>
<keyword id="KW-0249">Electron transport</keyword>
<keyword id="KW-0408">Iron</keyword>
<keyword id="KW-0460">Magnesium</keyword>
<keyword id="KW-0472">Membrane</keyword>
<keyword id="KW-0479">Metal-binding</keyword>
<keyword id="KW-0560">Oxidoreductase</keyword>
<keyword id="KW-0597">Phosphoprotein</keyword>
<keyword id="KW-0602">Photosynthesis</keyword>
<keyword id="KW-0604">Photosystem II</keyword>
<keyword id="KW-0934">Plastid</keyword>
<keyword id="KW-0793">Thylakoid</keyword>
<keyword id="KW-0812">Transmembrane</keyword>
<keyword id="KW-1133">Transmembrane helix</keyword>
<keyword id="KW-0813">Transport</keyword>
<accession>Q8S8X8</accession>
<geneLocation type="chloroplast"/>
<comment type="function">
    <text evidence="2">Photosystem II (PSII) is a light-driven water:plastoquinone oxidoreductase that uses light energy to abstract electrons from H(2)O, generating O(2) and a proton gradient subsequently used for ATP formation. It consists of a core antenna complex that captures photons, and an electron transfer chain that converts photonic excitation into a charge separation. The D1/D2 (PsbA/PsbD) reaction center heterodimer binds P680, the primary electron donor of PSII as well as several subsequent electron acceptors. D2 is needed for assembly of a stable PSII complex.</text>
</comment>
<comment type="catalytic activity">
    <reaction evidence="2">
        <text>2 a plastoquinone + 4 hnu + 2 H2O = 2 a plastoquinol + O2</text>
        <dbReference type="Rhea" id="RHEA:36359"/>
        <dbReference type="Rhea" id="RHEA-COMP:9561"/>
        <dbReference type="Rhea" id="RHEA-COMP:9562"/>
        <dbReference type="ChEBI" id="CHEBI:15377"/>
        <dbReference type="ChEBI" id="CHEBI:15379"/>
        <dbReference type="ChEBI" id="CHEBI:17757"/>
        <dbReference type="ChEBI" id="CHEBI:30212"/>
        <dbReference type="ChEBI" id="CHEBI:62192"/>
        <dbReference type="EC" id="1.10.3.9"/>
    </reaction>
</comment>
<comment type="cofactor">
    <text evidence="2">The D1/D2 heterodimer binds P680, chlorophylls that are the primary electron donor of PSII, and subsequent electron acceptors. It shares a non-heme iron and each subunit binds pheophytin, quinone, additional chlorophylls, carotenoids and lipids. There is also a Cl(-1) ion associated with D1 and D2, which is required for oxygen evolution. The PSII complex binds additional chlorophylls, carotenoids and specific lipids.</text>
</comment>
<comment type="subunit">
    <text evidence="2">PSII is composed of 1 copy each of membrane proteins PsbA, PsbB, PsbC, PsbD, PsbE, PsbF, PsbH, PsbI, PsbJ, PsbK, PsbL, PsbM, PsbT, PsbX, PsbY, PsbZ, Psb30/Ycf12, at least 3 peripheral proteins of the oxygen-evolving complex and a large number of cofactors. It forms dimeric complexes.</text>
</comment>
<comment type="subcellular location">
    <subcellularLocation>
        <location evidence="2">Plastid</location>
        <location evidence="2">Chloroplast thylakoid membrane</location>
        <topology evidence="2">Multi-pass membrane protein</topology>
    </subcellularLocation>
</comment>
<comment type="miscellaneous">
    <text evidence="2">2 of the reaction center chlorophylls (ChlD1 and ChlD2) are entirely coordinated by water.</text>
</comment>
<comment type="similarity">
    <text evidence="2">Belongs to the reaction center PufL/M/PsbA/D family.</text>
</comment>
<evidence type="ECO:0000250" key="1">
    <source>
        <dbReference type="UniProtKB" id="P56761"/>
    </source>
</evidence>
<evidence type="ECO:0000255" key="2">
    <source>
        <dbReference type="HAMAP-Rule" id="MF_01383"/>
    </source>
</evidence>
<sequence length="353" mass="39593">MTIALDKFTKDENDLFDIMDDWLRRDRFVFVGWSGLLLFPCAYFAVGGWFTGTTFVTSWYTHGLASSYLEGCNFLTAAVSTPANSLAHSLLLLWGPEAQGDFTRWCQLGGLWTFVALHGAFGLIGFMLRQFELARSVQLRPYNAIAFSGPIAVFVSVFLIYPLGQSGWFFAPSFGVAAIFRFILFFQGFHNWTLNPFHMMGVAGVLGAALLCAIHGATVENTLFEDGDGANTFRAFNPTQAEETYSMVTANRFWSQIFGVAFSNKRWLHFFMLFVPVTGLWMSALGVVGLALNLRAYDFVSQEIRAAEDPEFETFYTKNILLNEGIRAWMAAQDQPHENLIFPEEVLPRGNAL</sequence>
<gene>
    <name evidence="2" type="primary">psbD</name>
</gene>
<name>PSBD_ATRBE</name>
<organism>
    <name type="scientific">Atropa belladonna</name>
    <name type="common">Belladonna</name>
    <name type="synonym">Deadly nightshade</name>
    <dbReference type="NCBI Taxonomy" id="33113"/>
    <lineage>
        <taxon>Eukaryota</taxon>
        <taxon>Viridiplantae</taxon>
        <taxon>Streptophyta</taxon>
        <taxon>Embryophyta</taxon>
        <taxon>Tracheophyta</taxon>
        <taxon>Spermatophyta</taxon>
        <taxon>Magnoliopsida</taxon>
        <taxon>eudicotyledons</taxon>
        <taxon>Gunneridae</taxon>
        <taxon>Pentapetalae</taxon>
        <taxon>asterids</taxon>
        <taxon>lamiids</taxon>
        <taxon>Solanales</taxon>
        <taxon>Solanaceae</taxon>
        <taxon>Solanoideae</taxon>
        <taxon>Hyoscyameae</taxon>
        <taxon>Atropa</taxon>
    </lineage>
</organism>
<feature type="initiator methionine" description="Removed" evidence="1">
    <location>
        <position position="1"/>
    </location>
</feature>
<feature type="chain" id="PRO_0000359623" description="Photosystem II D2 protein">
    <location>
        <begin position="2"/>
        <end position="353"/>
    </location>
</feature>
<feature type="transmembrane region" description="Helical" evidence="2">
    <location>
        <begin position="41"/>
        <end position="61"/>
    </location>
</feature>
<feature type="transmembrane region" description="Helical" evidence="2">
    <location>
        <begin position="125"/>
        <end position="141"/>
    </location>
</feature>
<feature type="transmembrane region" description="Helical" evidence="2">
    <location>
        <begin position="153"/>
        <end position="166"/>
    </location>
</feature>
<feature type="transmembrane region" description="Helical" evidence="2">
    <location>
        <begin position="208"/>
        <end position="228"/>
    </location>
</feature>
<feature type="transmembrane region" description="Helical" evidence="2">
    <location>
        <begin position="279"/>
        <end position="295"/>
    </location>
</feature>
<feature type="binding site" description="axial binding residue" evidence="2">
    <location>
        <position position="118"/>
    </location>
    <ligand>
        <name>chlorophyll a</name>
        <dbReference type="ChEBI" id="CHEBI:58416"/>
        <label>ChlzD2</label>
    </ligand>
    <ligandPart>
        <name>Mg</name>
        <dbReference type="ChEBI" id="CHEBI:25107"/>
    </ligandPart>
</feature>
<feature type="binding site" evidence="2">
    <location>
        <position position="130"/>
    </location>
    <ligand>
        <name>pheophytin a</name>
        <dbReference type="ChEBI" id="CHEBI:136840"/>
        <label>D2</label>
    </ligand>
</feature>
<feature type="binding site" evidence="2">
    <location>
        <position position="143"/>
    </location>
    <ligand>
        <name>pheophytin a</name>
        <dbReference type="ChEBI" id="CHEBI:136840"/>
        <label>D2</label>
    </ligand>
</feature>
<feature type="binding site" description="axial binding residue" evidence="2">
    <location>
        <position position="198"/>
    </location>
    <ligand>
        <name>chlorophyll a</name>
        <dbReference type="ChEBI" id="CHEBI:58416"/>
        <label>PD2</label>
    </ligand>
    <ligandPart>
        <name>Mg</name>
        <dbReference type="ChEBI" id="CHEBI:25107"/>
    </ligandPart>
</feature>
<feature type="binding site" evidence="2">
    <location>
        <position position="215"/>
    </location>
    <ligand>
        <name>a plastoquinone</name>
        <dbReference type="ChEBI" id="CHEBI:17757"/>
        <label>Q(A)</label>
    </ligand>
</feature>
<feature type="binding site" evidence="2">
    <location>
        <position position="215"/>
    </location>
    <ligand>
        <name>Fe cation</name>
        <dbReference type="ChEBI" id="CHEBI:24875"/>
        <note>ligand shared with heterodimeric partner</note>
    </ligand>
</feature>
<feature type="binding site" evidence="2">
    <location>
        <position position="262"/>
    </location>
    <ligand>
        <name>a plastoquinone</name>
        <dbReference type="ChEBI" id="CHEBI:17757"/>
        <label>Q(A)</label>
    </ligand>
</feature>
<feature type="binding site" evidence="2">
    <location>
        <position position="269"/>
    </location>
    <ligand>
        <name>Fe cation</name>
        <dbReference type="ChEBI" id="CHEBI:24875"/>
        <note>ligand shared with heterodimeric partner</note>
    </ligand>
</feature>
<feature type="modified residue" description="N-acetylthreonine" evidence="1">
    <location>
        <position position="2"/>
    </location>
</feature>
<feature type="modified residue" description="Phosphothreonine" evidence="1">
    <location>
        <position position="2"/>
    </location>
</feature>
<dbReference type="EC" id="1.10.3.9" evidence="2"/>
<dbReference type="EMBL" id="AJ316582">
    <property type="protein sequence ID" value="CAC88039.1"/>
    <property type="molecule type" value="Genomic_DNA"/>
</dbReference>
<dbReference type="RefSeq" id="NP_783227.1">
    <property type="nucleotide sequence ID" value="NC_004561.1"/>
</dbReference>
<dbReference type="SMR" id="Q8S8X8"/>
<dbReference type="GeneID" id="806454"/>
<dbReference type="GO" id="GO:0009535">
    <property type="term" value="C:chloroplast thylakoid membrane"/>
    <property type="evidence" value="ECO:0007669"/>
    <property type="project" value="UniProtKB-SubCell"/>
</dbReference>
<dbReference type="GO" id="GO:0009523">
    <property type="term" value="C:photosystem II"/>
    <property type="evidence" value="ECO:0007669"/>
    <property type="project" value="UniProtKB-KW"/>
</dbReference>
<dbReference type="GO" id="GO:0016168">
    <property type="term" value="F:chlorophyll binding"/>
    <property type="evidence" value="ECO:0007669"/>
    <property type="project" value="UniProtKB-UniRule"/>
</dbReference>
<dbReference type="GO" id="GO:0045156">
    <property type="term" value="F:electron transporter, transferring electrons within the cyclic electron transport pathway of photosynthesis activity"/>
    <property type="evidence" value="ECO:0007669"/>
    <property type="project" value="InterPro"/>
</dbReference>
<dbReference type="GO" id="GO:0005506">
    <property type="term" value="F:iron ion binding"/>
    <property type="evidence" value="ECO:0007669"/>
    <property type="project" value="UniProtKB-UniRule"/>
</dbReference>
<dbReference type="GO" id="GO:0010242">
    <property type="term" value="F:oxygen evolving activity"/>
    <property type="evidence" value="ECO:0007669"/>
    <property type="project" value="UniProtKB-EC"/>
</dbReference>
<dbReference type="GO" id="GO:0009772">
    <property type="term" value="P:photosynthetic electron transport in photosystem II"/>
    <property type="evidence" value="ECO:0007669"/>
    <property type="project" value="InterPro"/>
</dbReference>
<dbReference type="CDD" id="cd09288">
    <property type="entry name" value="Photosystem-II_D2"/>
    <property type="match status" value="1"/>
</dbReference>
<dbReference type="FunFam" id="1.20.85.10:FF:000001">
    <property type="entry name" value="photosystem II D2 protein-like"/>
    <property type="match status" value="1"/>
</dbReference>
<dbReference type="Gene3D" id="1.20.85.10">
    <property type="entry name" value="Photosystem II protein D1-like"/>
    <property type="match status" value="1"/>
</dbReference>
<dbReference type="HAMAP" id="MF_01383">
    <property type="entry name" value="PSII_PsbD_D2"/>
    <property type="match status" value="1"/>
</dbReference>
<dbReference type="InterPro" id="IPR055266">
    <property type="entry name" value="D1/D2"/>
</dbReference>
<dbReference type="InterPro" id="IPR036854">
    <property type="entry name" value="Photo_II_D1/D2_sf"/>
</dbReference>
<dbReference type="InterPro" id="IPR000484">
    <property type="entry name" value="Photo_RC_L/M"/>
</dbReference>
<dbReference type="InterPro" id="IPR055265">
    <property type="entry name" value="Photo_RC_L/M_CS"/>
</dbReference>
<dbReference type="InterPro" id="IPR005868">
    <property type="entry name" value="PSII_PsbD/D2"/>
</dbReference>
<dbReference type="NCBIfam" id="TIGR01152">
    <property type="entry name" value="psbD"/>
    <property type="match status" value="1"/>
</dbReference>
<dbReference type="PANTHER" id="PTHR33149:SF12">
    <property type="entry name" value="PHOTOSYSTEM II D2 PROTEIN"/>
    <property type="match status" value="1"/>
</dbReference>
<dbReference type="PANTHER" id="PTHR33149">
    <property type="entry name" value="PHOTOSYSTEM II PROTEIN D1"/>
    <property type="match status" value="1"/>
</dbReference>
<dbReference type="Pfam" id="PF00124">
    <property type="entry name" value="Photo_RC"/>
    <property type="match status" value="1"/>
</dbReference>
<dbReference type="PRINTS" id="PR00256">
    <property type="entry name" value="REACTNCENTRE"/>
</dbReference>
<dbReference type="SUPFAM" id="SSF81483">
    <property type="entry name" value="Bacterial photosystem II reaction centre, L and M subunits"/>
    <property type="match status" value="1"/>
</dbReference>
<dbReference type="PROSITE" id="PS00244">
    <property type="entry name" value="REACTION_CENTER"/>
    <property type="match status" value="1"/>
</dbReference>